<accession>A6LSP0</accession>
<protein>
    <recommendedName>
        <fullName evidence="1">Small ribosomal subunit protein uS2</fullName>
    </recommendedName>
    <alternativeName>
        <fullName evidence="2">30S ribosomal protein S2</fullName>
    </alternativeName>
</protein>
<reference key="1">
    <citation type="submission" date="2007-06" db="EMBL/GenBank/DDBJ databases">
        <title>Complete sequence of Clostridium beijerinckii NCIMB 8052.</title>
        <authorList>
            <consortium name="US DOE Joint Genome Institute"/>
            <person name="Copeland A."/>
            <person name="Lucas S."/>
            <person name="Lapidus A."/>
            <person name="Barry K."/>
            <person name="Detter J.C."/>
            <person name="Glavina del Rio T."/>
            <person name="Hammon N."/>
            <person name="Israni S."/>
            <person name="Dalin E."/>
            <person name="Tice H."/>
            <person name="Pitluck S."/>
            <person name="Sims D."/>
            <person name="Brettin T."/>
            <person name="Bruce D."/>
            <person name="Tapia R."/>
            <person name="Brainard J."/>
            <person name="Schmutz J."/>
            <person name="Larimer F."/>
            <person name="Land M."/>
            <person name="Hauser L."/>
            <person name="Kyrpides N."/>
            <person name="Mikhailova N."/>
            <person name="Bennet G."/>
            <person name="Cann I."/>
            <person name="Chen J.-S."/>
            <person name="Contreras A.L."/>
            <person name="Jones D."/>
            <person name="Kashket E."/>
            <person name="Mitchell W."/>
            <person name="Stoddard S."/>
            <person name="Schwarz W."/>
            <person name="Qureshi N."/>
            <person name="Young M."/>
            <person name="Shi Z."/>
            <person name="Ezeji T."/>
            <person name="White B."/>
            <person name="Blaschek H."/>
            <person name="Richardson P."/>
        </authorList>
    </citation>
    <scope>NUCLEOTIDE SEQUENCE [LARGE SCALE GENOMIC DNA]</scope>
    <source>
        <strain>ATCC 51743 / NCIMB 8052</strain>
    </source>
</reference>
<dbReference type="EMBL" id="CP000721">
    <property type="protein sequence ID" value="ABR33370.1"/>
    <property type="molecule type" value="Genomic_DNA"/>
</dbReference>
<dbReference type="RefSeq" id="WP_011968525.1">
    <property type="nucleotide sequence ID" value="NC_009617.1"/>
</dbReference>
<dbReference type="SMR" id="A6LSP0"/>
<dbReference type="GeneID" id="66344178"/>
<dbReference type="KEGG" id="cbe:Cbei_1188"/>
<dbReference type="eggNOG" id="COG0052">
    <property type="taxonomic scope" value="Bacteria"/>
</dbReference>
<dbReference type="HOGENOM" id="CLU_040318_1_2_9"/>
<dbReference type="Proteomes" id="UP000000565">
    <property type="component" value="Chromosome"/>
</dbReference>
<dbReference type="GO" id="GO:0022627">
    <property type="term" value="C:cytosolic small ribosomal subunit"/>
    <property type="evidence" value="ECO:0007669"/>
    <property type="project" value="TreeGrafter"/>
</dbReference>
<dbReference type="GO" id="GO:0003735">
    <property type="term" value="F:structural constituent of ribosome"/>
    <property type="evidence" value="ECO:0007669"/>
    <property type="project" value="InterPro"/>
</dbReference>
<dbReference type="GO" id="GO:0006412">
    <property type="term" value="P:translation"/>
    <property type="evidence" value="ECO:0007669"/>
    <property type="project" value="UniProtKB-UniRule"/>
</dbReference>
<dbReference type="CDD" id="cd01425">
    <property type="entry name" value="RPS2"/>
    <property type="match status" value="1"/>
</dbReference>
<dbReference type="FunFam" id="1.10.287.610:FF:000001">
    <property type="entry name" value="30S ribosomal protein S2"/>
    <property type="match status" value="1"/>
</dbReference>
<dbReference type="Gene3D" id="3.40.50.10490">
    <property type="entry name" value="Glucose-6-phosphate isomerase like protein, domain 1"/>
    <property type="match status" value="1"/>
</dbReference>
<dbReference type="Gene3D" id="1.10.287.610">
    <property type="entry name" value="Helix hairpin bin"/>
    <property type="match status" value="1"/>
</dbReference>
<dbReference type="HAMAP" id="MF_00291_B">
    <property type="entry name" value="Ribosomal_uS2_B"/>
    <property type="match status" value="1"/>
</dbReference>
<dbReference type="InterPro" id="IPR001865">
    <property type="entry name" value="Ribosomal_uS2"/>
</dbReference>
<dbReference type="InterPro" id="IPR005706">
    <property type="entry name" value="Ribosomal_uS2_bac/mit/plastid"/>
</dbReference>
<dbReference type="InterPro" id="IPR018130">
    <property type="entry name" value="Ribosomal_uS2_CS"/>
</dbReference>
<dbReference type="InterPro" id="IPR023591">
    <property type="entry name" value="Ribosomal_uS2_flav_dom_sf"/>
</dbReference>
<dbReference type="NCBIfam" id="TIGR01011">
    <property type="entry name" value="rpsB_bact"/>
    <property type="match status" value="1"/>
</dbReference>
<dbReference type="PANTHER" id="PTHR12534">
    <property type="entry name" value="30S RIBOSOMAL PROTEIN S2 PROKARYOTIC AND ORGANELLAR"/>
    <property type="match status" value="1"/>
</dbReference>
<dbReference type="PANTHER" id="PTHR12534:SF0">
    <property type="entry name" value="SMALL RIBOSOMAL SUBUNIT PROTEIN US2M"/>
    <property type="match status" value="1"/>
</dbReference>
<dbReference type="Pfam" id="PF00318">
    <property type="entry name" value="Ribosomal_S2"/>
    <property type="match status" value="1"/>
</dbReference>
<dbReference type="PRINTS" id="PR00395">
    <property type="entry name" value="RIBOSOMALS2"/>
</dbReference>
<dbReference type="SUPFAM" id="SSF52313">
    <property type="entry name" value="Ribosomal protein S2"/>
    <property type="match status" value="1"/>
</dbReference>
<dbReference type="PROSITE" id="PS00962">
    <property type="entry name" value="RIBOSOMAL_S2_1"/>
    <property type="match status" value="1"/>
</dbReference>
<gene>
    <name evidence="1" type="primary">rpsB</name>
    <name type="ordered locus">Cbei_1188</name>
</gene>
<keyword id="KW-0687">Ribonucleoprotein</keyword>
<keyword id="KW-0689">Ribosomal protein</keyword>
<evidence type="ECO:0000255" key="1">
    <source>
        <dbReference type="HAMAP-Rule" id="MF_00291"/>
    </source>
</evidence>
<evidence type="ECO:0000305" key="2"/>
<comment type="similarity">
    <text evidence="1">Belongs to the universal ribosomal protein uS2 family.</text>
</comment>
<sequence length="233" mass="26315">MSVISMKQLLEAGVHFGHQTRRWNPKMAPYIFTERNGIYIIDLQKTVKKAEEAYNFVKQVAEEGKDILFVGTKKQAQEAIQEEAIRSNMHFVNNRWLGGMLTNFSTIRGRIRKLEQIEKMQEDGTFDVLPKKEVIKLKGEMEKLEKNLGGIRNLDASNVGAMFIVDPRKEKNAILEAKILGIPVVAIVDTNCDPEEVDYVIPGNDDAIRAVKLITAKMADAIMEGRQGEQLAE</sequence>
<organism>
    <name type="scientific">Clostridium beijerinckii (strain ATCC 51743 / NCIMB 8052)</name>
    <name type="common">Clostridium acetobutylicum</name>
    <dbReference type="NCBI Taxonomy" id="290402"/>
    <lineage>
        <taxon>Bacteria</taxon>
        <taxon>Bacillati</taxon>
        <taxon>Bacillota</taxon>
        <taxon>Clostridia</taxon>
        <taxon>Eubacteriales</taxon>
        <taxon>Clostridiaceae</taxon>
        <taxon>Clostridium</taxon>
    </lineage>
</organism>
<proteinExistence type="inferred from homology"/>
<feature type="chain" id="PRO_1000078873" description="Small ribosomal subunit protein uS2">
    <location>
        <begin position="1"/>
        <end position="233"/>
    </location>
</feature>
<name>RS2_CLOB8</name>